<reference key="1">
    <citation type="journal article" date="2009" name="PLoS ONE">
        <title>Salmonella paratyphi C: genetic divergence from Salmonella choleraesuis and pathogenic convergence with Salmonella typhi.</title>
        <authorList>
            <person name="Liu W.-Q."/>
            <person name="Feng Y."/>
            <person name="Wang Y."/>
            <person name="Zou Q.-H."/>
            <person name="Chen F."/>
            <person name="Guo J.-T."/>
            <person name="Peng Y.-H."/>
            <person name="Jin Y."/>
            <person name="Li Y.-G."/>
            <person name="Hu S.-N."/>
            <person name="Johnston R.N."/>
            <person name="Liu G.-R."/>
            <person name="Liu S.-L."/>
        </authorList>
    </citation>
    <scope>NUCLEOTIDE SEQUENCE [LARGE SCALE GENOMIC DNA]</scope>
    <source>
        <strain>RKS4594</strain>
    </source>
</reference>
<feature type="chain" id="PRO_1000147743" description="Pole-localizer protein TmaR">
    <location>
        <begin position="1"/>
        <end position="111"/>
    </location>
</feature>
<feature type="coiled-coil region" evidence="1">
    <location>
        <begin position="14"/>
        <end position="41"/>
    </location>
</feature>
<organism>
    <name type="scientific">Salmonella paratyphi C (strain RKS4594)</name>
    <dbReference type="NCBI Taxonomy" id="476213"/>
    <lineage>
        <taxon>Bacteria</taxon>
        <taxon>Pseudomonadati</taxon>
        <taxon>Pseudomonadota</taxon>
        <taxon>Gammaproteobacteria</taxon>
        <taxon>Enterobacterales</taxon>
        <taxon>Enterobacteriaceae</taxon>
        <taxon>Salmonella</taxon>
    </lineage>
</organism>
<sequence>METTKPSFQDVLEFVRLFRRKNKLQREIQDIEKKIRDNQKRVLLLDNLSDYIKPGMSVEAIQGIIASMKSDYEDRVDDYIIKNAEISKERRDISKKLKAMGEMKHADVKAE</sequence>
<comment type="function">
    <text evidence="1">Pole-localizer protein involved in the regulation of several cellular processes.</text>
</comment>
<comment type="subcellular location">
    <subcellularLocation>
        <location evidence="1">Cytoplasm</location>
    </subcellularLocation>
    <text evidence="1">Forms clusters that localize mainly near one pole of the cell.</text>
</comment>
<comment type="similarity">
    <text evidence="1">Belongs to the pole-localizer TmaR family.</text>
</comment>
<dbReference type="EMBL" id="CP000857">
    <property type="protein sequence ID" value="ACN45802.1"/>
    <property type="molecule type" value="Genomic_DNA"/>
</dbReference>
<dbReference type="RefSeq" id="WP_000450405.1">
    <property type="nucleotide sequence ID" value="NC_012125.1"/>
</dbReference>
<dbReference type="SMR" id="C0Q1L6"/>
<dbReference type="KEGG" id="sei:SPC_1655"/>
<dbReference type="HOGENOM" id="CLU_153146_0_0_6"/>
<dbReference type="Proteomes" id="UP000001599">
    <property type="component" value="Chromosome"/>
</dbReference>
<dbReference type="GO" id="GO:0005829">
    <property type="term" value="C:cytosol"/>
    <property type="evidence" value="ECO:0007669"/>
    <property type="project" value="TreeGrafter"/>
</dbReference>
<dbReference type="HAMAP" id="MF_00683">
    <property type="entry name" value="Pole_loc_TmaR"/>
    <property type="match status" value="1"/>
</dbReference>
<dbReference type="InterPro" id="IPR007458">
    <property type="entry name" value="DUF496"/>
</dbReference>
<dbReference type="InterPro" id="IPR053375">
    <property type="entry name" value="UPF0265"/>
</dbReference>
<dbReference type="NCBIfam" id="NF003844">
    <property type="entry name" value="PRK05423.1"/>
    <property type="match status" value="1"/>
</dbReference>
<dbReference type="NCBIfam" id="NF040881">
    <property type="entry name" value="PTS_reg_TmaR"/>
    <property type="match status" value="1"/>
</dbReference>
<dbReference type="PANTHER" id="PTHR39591">
    <property type="entry name" value="UPF0265 PROTEIN YEEX"/>
    <property type="match status" value="1"/>
</dbReference>
<dbReference type="PANTHER" id="PTHR39591:SF1">
    <property type="entry name" value="UPF0265 PROTEIN YEEX"/>
    <property type="match status" value="1"/>
</dbReference>
<dbReference type="Pfam" id="PF04363">
    <property type="entry name" value="DUF496"/>
    <property type="match status" value="1"/>
</dbReference>
<dbReference type="PIRSF" id="PIRSF028773">
    <property type="entry name" value="UCP028773"/>
    <property type="match status" value="1"/>
</dbReference>
<gene>
    <name evidence="1" type="primary">tmaR</name>
    <name type="ordered locus">SPC_1655</name>
</gene>
<keyword id="KW-0175">Coiled coil</keyword>
<keyword id="KW-0963">Cytoplasm</keyword>
<proteinExistence type="inferred from homology"/>
<protein>
    <recommendedName>
        <fullName evidence="1">Pole-localizer protein TmaR</fullName>
    </recommendedName>
</protein>
<name>TMAR_SALPC</name>
<evidence type="ECO:0000255" key="1">
    <source>
        <dbReference type="HAMAP-Rule" id="MF_00683"/>
    </source>
</evidence>
<accession>C0Q1L6</accession>